<dbReference type="EMBL" id="CP000580">
    <property type="protein sequence ID" value="ABN96942.1"/>
    <property type="molecule type" value="Genomic_DNA"/>
</dbReference>
<dbReference type="SMR" id="A3PVL5"/>
<dbReference type="KEGG" id="mjl:Mjls_1139"/>
<dbReference type="HOGENOM" id="CLU_103849_1_2_11"/>
<dbReference type="BioCyc" id="MSP164757:G1G8C-1151-MONOMER"/>
<dbReference type="GO" id="GO:0005829">
    <property type="term" value="C:cytosol"/>
    <property type="evidence" value="ECO:0007669"/>
    <property type="project" value="TreeGrafter"/>
</dbReference>
<dbReference type="GO" id="GO:0015935">
    <property type="term" value="C:small ribosomal subunit"/>
    <property type="evidence" value="ECO:0007669"/>
    <property type="project" value="TreeGrafter"/>
</dbReference>
<dbReference type="GO" id="GO:0019843">
    <property type="term" value="F:rRNA binding"/>
    <property type="evidence" value="ECO:0007669"/>
    <property type="project" value="UniProtKB-UniRule"/>
</dbReference>
<dbReference type="GO" id="GO:0003735">
    <property type="term" value="F:structural constituent of ribosome"/>
    <property type="evidence" value="ECO:0007669"/>
    <property type="project" value="InterPro"/>
</dbReference>
<dbReference type="GO" id="GO:0000049">
    <property type="term" value="F:tRNA binding"/>
    <property type="evidence" value="ECO:0007669"/>
    <property type="project" value="UniProtKB-UniRule"/>
</dbReference>
<dbReference type="GO" id="GO:0006412">
    <property type="term" value="P:translation"/>
    <property type="evidence" value="ECO:0007669"/>
    <property type="project" value="UniProtKB-UniRule"/>
</dbReference>
<dbReference type="FunFam" id="1.10.8.50:FF:000001">
    <property type="entry name" value="30S ribosomal protein S13"/>
    <property type="match status" value="1"/>
</dbReference>
<dbReference type="FunFam" id="4.10.910.10:FF:000001">
    <property type="entry name" value="30S ribosomal protein S13"/>
    <property type="match status" value="1"/>
</dbReference>
<dbReference type="Gene3D" id="1.10.8.50">
    <property type="match status" value="1"/>
</dbReference>
<dbReference type="Gene3D" id="4.10.910.10">
    <property type="entry name" value="30s ribosomal protein s13, domain 2"/>
    <property type="match status" value="1"/>
</dbReference>
<dbReference type="HAMAP" id="MF_01315">
    <property type="entry name" value="Ribosomal_uS13"/>
    <property type="match status" value="1"/>
</dbReference>
<dbReference type="InterPro" id="IPR027437">
    <property type="entry name" value="Rbsml_uS13_C"/>
</dbReference>
<dbReference type="InterPro" id="IPR001892">
    <property type="entry name" value="Ribosomal_uS13"/>
</dbReference>
<dbReference type="InterPro" id="IPR010979">
    <property type="entry name" value="Ribosomal_uS13-like_H2TH"/>
</dbReference>
<dbReference type="InterPro" id="IPR019980">
    <property type="entry name" value="Ribosomal_uS13_bac-type"/>
</dbReference>
<dbReference type="InterPro" id="IPR018269">
    <property type="entry name" value="Ribosomal_uS13_CS"/>
</dbReference>
<dbReference type="NCBIfam" id="TIGR03631">
    <property type="entry name" value="uS13_bact"/>
    <property type="match status" value="1"/>
</dbReference>
<dbReference type="PANTHER" id="PTHR10871">
    <property type="entry name" value="30S RIBOSOMAL PROTEIN S13/40S RIBOSOMAL PROTEIN S18"/>
    <property type="match status" value="1"/>
</dbReference>
<dbReference type="PANTHER" id="PTHR10871:SF1">
    <property type="entry name" value="SMALL RIBOSOMAL SUBUNIT PROTEIN US13M"/>
    <property type="match status" value="1"/>
</dbReference>
<dbReference type="Pfam" id="PF00416">
    <property type="entry name" value="Ribosomal_S13"/>
    <property type="match status" value="1"/>
</dbReference>
<dbReference type="PIRSF" id="PIRSF002134">
    <property type="entry name" value="Ribosomal_S13"/>
    <property type="match status" value="1"/>
</dbReference>
<dbReference type="SUPFAM" id="SSF46946">
    <property type="entry name" value="S13-like H2TH domain"/>
    <property type="match status" value="1"/>
</dbReference>
<dbReference type="PROSITE" id="PS00646">
    <property type="entry name" value="RIBOSOMAL_S13_1"/>
    <property type="match status" value="1"/>
</dbReference>
<dbReference type="PROSITE" id="PS50159">
    <property type="entry name" value="RIBOSOMAL_S13_2"/>
    <property type="match status" value="1"/>
</dbReference>
<reference key="1">
    <citation type="submission" date="2007-02" db="EMBL/GenBank/DDBJ databases">
        <title>Complete sequence of Mycobacterium sp. JLS.</title>
        <authorList>
            <consortium name="US DOE Joint Genome Institute"/>
            <person name="Copeland A."/>
            <person name="Lucas S."/>
            <person name="Lapidus A."/>
            <person name="Barry K."/>
            <person name="Detter J.C."/>
            <person name="Glavina del Rio T."/>
            <person name="Hammon N."/>
            <person name="Israni S."/>
            <person name="Dalin E."/>
            <person name="Tice H."/>
            <person name="Pitluck S."/>
            <person name="Chain P."/>
            <person name="Malfatti S."/>
            <person name="Shin M."/>
            <person name="Vergez L."/>
            <person name="Schmutz J."/>
            <person name="Larimer F."/>
            <person name="Land M."/>
            <person name="Hauser L."/>
            <person name="Kyrpides N."/>
            <person name="Mikhailova N."/>
            <person name="Miller C.D."/>
            <person name="Anderson A.J."/>
            <person name="Sims R.C."/>
            <person name="Richardson P."/>
        </authorList>
    </citation>
    <scope>NUCLEOTIDE SEQUENCE [LARGE SCALE GENOMIC DNA]</scope>
    <source>
        <strain>JLS</strain>
    </source>
</reference>
<gene>
    <name evidence="1" type="primary">rpsM</name>
    <name type="ordered locus">Mjls_1139</name>
</gene>
<keyword id="KW-0687">Ribonucleoprotein</keyword>
<keyword id="KW-0689">Ribosomal protein</keyword>
<keyword id="KW-0694">RNA-binding</keyword>
<keyword id="KW-0699">rRNA-binding</keyword>
<keyword id="KW-0820">tRNA-binding</keyword>
<organism>
    <name type="scientific">Mycobacterium sp. (strain JLS)</name>
    <dbReference type="NCBI Taxonomy" id="164757"/>
    <lineage>
        <taxon>Bacteria</taxon>
        <taxon>Bacillati</taxon>
        <taxon>Actinomycetota</taxon>
        <taxon>Actinomycetes</taxon>
        <taxon>Mycobacteriales</taxon>
        <taxon>Mycobacteriaceae</taxon>
        <taxon>Mycobacterium</taxon>
    </lineage>
</organism>
<accession>A3PVL5</accession>
<name>RS13_MYCSJ</name>
<evidence type="ECO:0000255" key="1">
    <source>
        <dbReference type="HAMAP-Rule" id="MF_01315"/>
    </source>
</evidence>
<evidence type="ECO:0000256" key="2">
    <source>
        <dbReference type="SAM" id="MobiDB-lite"/>
    </source>
</evidence>
<evidence type="ECO:0000305" key="3"/>
<sequence>MARLVGVDLPRDKRMEIALTYIYGVGRTRSQEILEATGIDRDLRTKDLTDDQVTQLRDYIEANLKVEGDLRREVQADIRRKIEIGCYQGLRHRRGLPVRGQRTKTNARTRKGPKRTIAGKKKAR</sequence>
<protein>
    <recommendedName>
        <fullName evidence="1">Small ribosomal subunit protein uS13</fullName>
    </recommendedName>
    <alternativeName>
        <fullName evidence="3">30S ribosomal protein S13</fullName>
    </alternativeName>
</protein>
<comment type="function">
    <text evidence="1">Located at the top of the head of the 30S subunit, it contacts several helices of the 16S rRNA. In the 70S ribosome it contacts the 23S rRNA (bridge B1a) and protein L5 of the 50S subunit (bridge B1b), connecting the 2 subunits; these bridges are implicated in subunit movement. Contacts the tRNAs in the A and P-sites.</text>
</comment>
<comment type="subunit">
    <text evidence="1">Part of the 30S ribosomal subunit. Forms a loose heterodimer with protein S19. Forms two bridges to the 50S subunit in the 70S ribosome.</text>
</comment>
<comment type="similarity">
    <text evidence="1">Belongs to the universal ribosomal protein uS13 family.</text>
</comment>
<feature type="chain" id="PRO_0000306649" description="Small ribosomal subunit protein uS13">
    <location>
        <begin position="1"/>
        <end position="124"/>
    </location>
</feature>
<feature type="region of interest" description="Disordered" evidence="2">
    <location>
        <begin position="95"/>
        <end position="124"/>
    </location>
</feature>
<proteinExistence type="inferred from homology"/>